<keyword id="KW-0227">DNA damage</keyword>
<keyword id="KW-0234">DNA repair</keyword>
<keyword id="KW-0238">DNA-binding</keyword>
<keyword id="KW-0539">Nucleus</keyword>
<keyword id="KW-0597">Phosphoprotein</keyword>
<keyword id="KW-1185">Reference proteome</keyword>
<keyword id="KW-0832">Ubl conjugation</keyword>
<evidence type="ECO:0000250" key="1"/>
<evidence type="ECO:0000250" key="2">
    <source>
        <dbReference type="UniProtKB" id="Q9BQ15"/>
    </source>
</evidence>
<evidence type="ECO:0000256" key="3">
    <source>
        <dbReference type="SAM" id="MobiDB-lite"/>
    </source>
</evidence>
<evidence type="ECO:0000305" key="4"/>
<feature type="chain" id="PRO_0000333960" description="SOSS complex subunit B1">
    <location>
        <begin position="1"/>
        <end position="212"/>
    </location>
</feature>
<feature type="DNA-binding region" description="OB">
    <location>
        <begin position="22"/>
        <end position="92"/>
    </location>
</feature>
<feature type="region of interest" description="Disordered" evidence="3">
    <location>
        <begin position="110"/>
        <end position="212"/>
    </location>
</feature>
<feature type="compositionally biased region" description="Polar residues" evidence="3">
    <location>
        <begin position="114"/>
        <end position="130"/>
    </location>
</feature>
<feature type="compositionally biased region" description="Low complexity" evidence="3">
    <location>
        <begin position="131"/>
        <end position="148"/>
    </location>
</feature>
<feature type="compositionally biased region" description="Polar residues" evidence="3">
    <location>
        <begin position="149"/>
        <end position="160"/>
    </location>
</feature>
<feature type="compositionally biased region" description="Low complexity" evidence="3">
    <location>
        <begin position="166"/>
        <end position="178"/>
    </location>
</feature>
<feature type="modified residue" description="Phosphothreonine; by ATM" evidence="2">
    <location>
        <position position="117"/>
    </location>
</feature>
<gene>
    <name type="primary">Nabp2</name>
    <name type="synonym">Obfc2b</name>
    <name type="synonym">Ssb1</name>
</gene>
<accession>Q8R2Y9</accession>
<dbReference type="EMBL" id="DQ158906">
    <property type="protein sequence ID" value="AAZ85395.1"/>
    <property type="molecule type" value="mRNA"/>
</dbReference>
<dbReference type="EMBL" id="BC026942">
    <property type="protein sequence ID" value="AAH26942.1"/>
    <property type="molecule type" value="mRNA"/>
</dbReference>
<dbReference type="CCDS" id="CCDS24276.1"/>
<dbReference type="RefSeq" id="NP_001345901.1">
    <property type="nucleotide sequence ID" value="NM_001358972.1"/>
</dbReference>
<dbReference type="RefSeq" id="NP_081533.1">
    <property type="nucleotide sequence ID" value="NM_027257.2"/>
</dbReference>
<dbReference type="RefSeq" id="XP_006514129.1">
    <property type="nucleotide sequence ID" value="XM_006514066.4"/>
</dbReference>
<dbReference type="RefSeq" id="XP_006514130.1">
    <property type="nucleotide sequence ID" value="XM_006514067.4"/>
</dbReference>
<dbReference type="RefSeq" id="XP_006514131.1">
    <property type="nucleotide sequence ID" value="XM_006514068.1"/>
</dbReference>
<dbReference type="RefSeq" id="XP_030101113.1">
    <property type="nucleotide sequence ID" value="XM_030245253.2"/>
</dbReference>
<dbReference type="RefSeq" id="XP_036011881.1">
    <property type="nucleotide sequence ID" value="XM_036155988.1"/>
</dbReference>
<dbReference type="SMR" id="Q8R2Y9"/>
<dbReference type="BioGRID" id="213754">
    <property type="interactions" value="1"/>
</dbReference>
<dbReference type="ComplexPortal" id="CPX-613">
    <property type="entry name" value="SOSS1 complex"/>
</dbReference>
<dbReference type="FunCoup" id="Q8R2Y9">
    <property type="interactions" value="2059"/>
</dbReference>
<dbReference type="STRING" id="10090.ENSMUSP00000128634"/>
<dbReference type="PhosphoSitePlus" id="Q8R2Y9"/>
<dbReference type="PaxDb" id="10090-ENSMUSP00000026439"/>
<dbReference type="ProteomicsDB" id="261552"/>
<dbReference type="Pumba" id="Q8R2Y9"/>
<dbReference type="Antibodypedia" id="28054">
    <property type="antibodies" value="133 antibodies from 23 providers"/>
</dbReference>
<dbReference type="Ensembl" id="ENSMUST00000026439.14">
    <property type="protein sequence ID" value="ENSMUSP00000026439.8"/>
    <property type="gene ID" value="ENSMUSG00000025374.14"/>
</dbReference>
<dbReference type="Ensembl" id="ENSMUST00000164199.8">
    <property type="protein sequence ID" value="ENSMUSP00000128634.2"/>
    <property type="gene ID" value="ENSMUSG00000025374.14"/>
</dbReference>
<dbReference type="GeneID" id="69917"/>
<dbReference type="KEGG" id="mmu:69917"/>
<dbReference type="UCSC" id="uc007hmq.1">
    <property type="organism name" value="mouse"/>
</dbReference>
<dbReference type="AGR" id="MGI:1917167"/>
<dbReference type="CTD" id="79035"/>
<dbReference type="MGI" id="MGI:1917167">
    <property type="gene designation" value="Nabp2"/>
</dbReference>
<dbReference type="VEuPathDB" id="HostDB:ENSMUSG00000025374"/>
<dbReference type="eggNOG" id="KOG3416">
    <property type="taxonomic scope" value="Eukaryota"/>
</dbReference>
<dbReference type="GeneTree" id="ENSGT00940000161079"/>
<dbReference type="HOGENOM" id="CLU_102724_0_1_1"/>
<dbReference type="InParanoid" id="Q8R2Y9"/>
<dbReference type="OMA" id="QSKAAQN"/>
<dbReference type="PhylomeDB" id="Q8R2Y9"/>
<dbReference type="TreeFam" id="TF313902"/>
<dbReference type="Reactome" id="R-MMU-6807505">
    <property type="pathway name" value="RNA polymerase II transcribes snRNA genes"/>
</dbReference>
<dbReference type="BioGRID-ORCS" id="69917">
    <property type="hits" value="3 hits in 113 CRISPR screens"/>
</dbReference>
<dbReference type="ChiTaRS" id="Nabp2">
    <property type="organism name" value="mouse"/>
</dbReference>
<dbReference type="PRO" id="PR:Q8R2Y9"/>
<dbReference type="Proteomes" id="UP000000589">
    <property type="component" value="Chromosome 10"/>
</dbReference>
<dbReference type="RNAct" id="Q8R2Y9">
    <property type="molecule type" value="protein"/>
</dbReference>
<dbReference type="Bgee" id="ENSMUSG00000025374">
    <property type="expression patterns" value="Expressed in embryonic post-anal tail and 76 other cell types or tissues"/>
</dbReference>
<dbReference type="ExpressionAtlas" id="Q8R2Y9">
    <property type="expression patterns" value="baseline and differential"/>
</dbReference>
<dbReference type="GO" id="GO:0000781">
    <property type="term" value="C:chromosome, telomeric region"/>
    <property type="evidence" value="ECO:0000314"/>
    <property type="project" value="BHF-UCL"/>
</dbReference>
<dbReference type="GO" id="GO:0005829">
    <property type="term" value="C:cytosol"/>
    <property type="evidence" value="ECO:0007669"/>
    <property type="project" value="Ensembl"/>
</dbReference>
<dbReference type="GO" id="GO:0005654">
    <property type="term" value="C:nucleoplasm"/>
    <property type="evidence" value="ECO:0007669"/>
    <property type="project" value="Ensembl"/>
</dbReference>
<dbReference type="GO" id="GO:0005634">
    <property type="term" value="C:nucleus"/>
    <property type="evidence" value="ECO:0000250"/>
    <property type="project" value="UniProtKB"/>
</dbReference>
<dbReference type="GO" id="GO:0035861">
    <property type="term" value="C:site of double-strand break"/>
    <property type="evidence" value="ECO:0007669"/>
    <property type="project" value="Ensembl"/>
</dbReference>
<dbReference type="GO" id="GO:0070876">
    <property type="term" value="C:SOSS complex"/>
    <property type="evidence" value="ECO:0000250"/>
    <property type="project" value="UniProtKB"/>
</dbReference>
<dbReference type="GO" id="GO:0070182">
    <property type="term" value="F:DNA polymerase binding"/>
    <property type="evidence" value="ECO:0007669"/>
    <property type="project" value="Ensembl"/>
</dbReference>
<dbReference type="GO" id="GO:0098505">
    <property type="term" value="F:G-rich strand telomeric DNA binding"/>
    <property type="evidence" value="ECO:0007669"/>
    <property type="project" value="Ensembl"/>
</dbReference>
<dbReference type="GO" id="GO:0003697">
    <property type="term" value="F:single-stranded DNA binding"/>
    <property type="evidence" value="ECO:0000250"/>
    <property type="project" value="UniProtKB"/>
</dbReference>
<dbReference type="GO" id="GO:0006974">
    <property type="term" value="P:DNA damage response"/>
    <property type="evidence" value="ECO:0000250"/>
    <property type="project" value="UniProtKB"/>
</dbReference>
<dbReference type="GO" id="GO:0006281">
    <property type="term" value="P:DNA repair"/>
    <property type="evidence" value="ECO:0000315"/>
    <property type="project" value="BHF-UCL"/>
</dbReference>
<dbReference type="GO" id="GO:0000724">
    <property type="term" value="P:double-strand break repair via homologous recombination"/>
    <property type="evidence" value="ECO:0000250"/>
    <property type="project" value="UniProtKB"/>
</dbReference>
<dbReference type="GO" id="GO:0070200">
    <property type="term" value="P:establishment of protein localization to telomere"/>
    <property type="evidence" value="ECO:0007669"/>
    <property type="project" value="Ensembl"/>
</dbReference>
<dbReference type="GO" id="GO:0044818">
    <property type="term" value="P:mitotic G2/M transition checkpoint"/>
    <property type="evidence" value="ECO:0000250"/>
    <property type="project" value="UniProtKB"/>
</dbReference>
<dbReference type="GO" id="GO:1904355">
    <property type="term" value="P:positive regulation of telomere capping"/>
    <property type="evidence" value="ECO:0000315"/>
    <property type="project" value="BHF-UCL"/>
</dbReference>
<dbReference type="GO" id="GO:0010212">
    <property type="term" value="P:response to ionizing radiation"/>
    <property type="evidence" value="ECO:0000250"/>
    <property type="project" value="UniProtKB"/>
</dbReference>
<dbReference type="CDD" id="cd04491">
    <property type="entry name" value="SoSSB_OBF"/>
    <property type="match status" value="1"/>
</dbReference>
<dbReference type="FunFam" id="2.40.50.140:FF:000072">
    <property type="entry name" value="SOSS complex subunit B2"/>
    <property type="match status" value="1"/>
</dbReference>
<dbReference type="Gene3D" id="2.40.50.140">
    <property type="entry name" value="Nucleic acid-binding proteins"/>
    <property type="match status" value="1"/>
</dbReference>
<dbReference type="InterPro" id="IPR012340">
    <property type="entry name" value="NA-bd_OB-fold"/>
</dbReference>
<dbReference type="InterPro" id="IPR051231">
    <property type="entry name" value="SOSS-B"/>
</dbReference>
<dbReference type="InterPro" id="IPR048970">
    <property type="entry name" value="Ssb-like_OB"/>
</dbReference>
<dbReference type="PANTHER" id="PTHR13356">
    <property type="entry name" value="OB FOLD NUCLEIC ACID BINDING PROTEIN-RELATED"/>
    <property type="match status" value="1"/>
</dbReference>
<dbReference type="PANTHER" id="PTHR13356:SF3">
    <property type="entry name" value="SOSS COMPLEX SUBUNIT B1"/>
    <property type="match status" value="1"/>
</dbReference>
<dbReference type="Pfam" id="PF21473">
    <property type="entry name" value="Ssb-like_OB"/>
    <property type="match status" value="1"/>
</dbReference>
<dbReference type="SUPFAM" id="SSF50249">
    <property type="entry name" value="Nucleic acid-binding proteins"/>
    <property type="match status" value="1"/>
</dbReference>
<name>SOSB1_MOUSE</name>
<protein>
    <recommendedName>
        <fullName>SOSS complex subunit B1</fullName>
    </recommendedName>
    <alternativeName>
        <fullName>Nucleic acid-binding protein 2</fullName>
    </alternativeName>
    <alternativeName>
        <fullName>Oligonucleotide/oligosaccharide-binding fold-containing protein 2B</fullName>
    </alternativeName>
    <alternativeName>
        <fullName>Sensor of single-strand DNA complex subunit B1</fullName>
    </alternativeName>
    <alternativeName>
        <fullName>Sensor of ssDNA subunit B1</fullName>
        <shortName>SOSS-B1</shortName>
    </alternativeName>
    <alternativeName>
        <fullName>Single-stranded DNA-binding protein 1</fullName>
    </alternativeName>
</protein>
<sequence length="212" mass="22628">MTTETFVKDIKPGLKNLNLIFIVLETGRVTKTKDGHEVRTCKVADKTGSINISVWDDVGNLIQPGDIIRLTKGYASVFKGCLTLYTGRGGDLQKIGEFCMVYSEVPNFSEPNPEYNTQQAPNKSVQNNDNSPTAPQATTGPPAASPASENQNGNGLSTQLGPVGGPHPSHTPSHPPSTRITRSQPNHTPSGPPGPSSNPVSNGKETRRSSKR</sequence>
<proteinExistence type="evidence at protein level"/>
<reference key="1">
    <citation type="journal article" date="2006" name="Biochem. J.">
        <title>NABP1, a novel RORgamma-regulated gene encoding a single-stranded nucleic-acid-binding protein.</title>
        <authorList>
            <person name="Kang H.S."/>
            <person name="Beak J.Y."/>
            <person name="Kim Y.-S."/>
            <person name="Petrovich R.M."/>
            <person name="Collins J.B."/>
            <person name="Grissom S.F."/>
            <person name="Jetten A.M."/>
        </authorList>
    </citation>
    <scope>NUCLEOTIDE SEQUENCE [MRNA]</scope>
    <scope>TISSUE SPECIFICITY</scope>
</reference>
<reference key="2">
    <citation type="journal article" date="2004" name="Genome Res.">
        <title>The status, quality, and expansion of the NIH full-length cDNA project: the Mammalian Gene Collection (MGC).</title>
        <authorList>
            <consortium name="The MGC Project Team"/>
        </authorList>
    </citation>
    <scope>NUCLEOTIDE SEQUENCE [LARGE SCALE MRNA]</scope>
    <source>
        <strain>FVB/N-3</strain>
        <tissue>Mammary tumor</tissue>
    </source>
</reference>
<reference key="3">
    <citation type="journal article" date="2010" name="Cell">
        <title>A tissue-specific atlas of mouse protein phosphorylation and expression.</title>
        <authorList>
            <person name="Huttlin E.L."/>
            <person name="Jedrychowski M.P."/>
            <person name="Elias J.E."/>
            <person name="Goswami T."/>
            <person name="Rad R."/>
            <person name="Beausoleil S.A."/>
            <person name="Villen J."/>
            <person name="Haas W."/>
            <person name="Sowa M.E."/>
            <person name="Gygi S.P."/>
        </authorList>
    </citation>
    <scope>IDENTIFICATION BY MASS SPECTROMETRY [LARGE SCALE ANALYSIS]</scope>
    <source>
        <tissue>Brain</tissue>
        <tissue>Spleen</tissue>
    </source>
</reference>
<comment type="function">
    <text evidence="2">Component of the SOSS complex, a multiprotein complex that functions downstream of the MRN complex to promote DNA repair and G2/M checkpoint. In the SOSS complex, acts as a sensor of single-stranded DNA that binds to single-stranded DNA, in particular to polypyrimidines. The SOSS complex associates with DNA lesions and influences diverse endpoints in the cellular DNA damage response including cell-cycle checkpoint activation, recombinational repair and maintenance of genomic stability. Required for efficient homologous recombination-dependent repair of double-strand breaks (DSBs) and ATM-dependent signaling pathways (By similarity).</text>
</comment>
<comment type="subunit">
    <text evidence="2">Component of the SOSS complex, composed of SOSS-B (SOSS-B1/NABP2 or SOSS-B2/NABP1), SOSS-A/INTS3 and SOSS-C/INIP. SOSS complexes containing SOSS-B1/NABP2 are more abundant than complexes containing SOSS-B2/NABP1. Directly interacts with ATM, SOSS-A/INTS3 and RAD51. Interacts with INTS7 (By similarity).</text>
</comment>
<comment type="subcellular location">
    <subcellularLocation>
        <location evidence="1">Nucleus</location>
    </subcellularLocation>
    <text evidence="2">Localizes to nuclear foci following DNA damage. Foci formation is not cell-cycle dependent. Partial colocalization with RAD51 after ionizing radiation treatment (By similarity).</text>
</comment>
<comment type="PTM">
    <text evidence="2">Phosphorylated by ATM in response to DNA damage. Phosphorylation prevents degradation by the proteasome, hence stabilization of the protein and accumulation within cells (By similarity).</text>
</comment>
<comment type="PTM">
    <text evidence="2">Ubiquitinated in a FBXL5-dependent manner, leading to proteasomal degradation.</text>
</comment>
<comment type="similarity">
    <text evidence="4">Belongs to the SOSS-B family. SOSS-B1 subfamily.</text>
</comment>
<organism>
    <name type="scientific">Mus musculus</name>
    <name type="common">Mouse</name>
    <dbReference type="NCBI Taxonomy" id="10090"/>
    <lineage>
        <taxon>Eukaryota</taxon>
        <taxon>Metazoa</taxon>
        <taxon>Chordata</taxon>
        <taxon>Craniata</taxon>
        <taxon>Vertebrata</taxon>
        <taxon>Euteleostomi</taxon>
        <taxon>Mammalia</taxon>
        <taxon>Eutheria</taxon>
        <taxon>Euarchontoglires</taxon>
        <taxon>Glires</taxon>
        <taxon>Rodentia</taxon>
        <taxon>Myomorpha</taxon>
        <taxon>Muroidea</taxon>
        <taxon>Muridae</taxon>
        <taxon>Murinae</taxon>
        <taxon>Mus</taxon>
        <taxon>Mus</taxon>
    </lineage>
</organism>